<gene>
    <name type="primary">Il1r2</name>
    <name type="synonym">Il-1r2</name>
    <name type="synonym">Il1rb</name>
</gene>
<evidence type="ECO:0000250" key="1"/>
<evidence type="ECO:0000255" key="2"/>
<evidence type="ECO:0000255" key="3">
    <source>
        <dbReference type="PROSITE-ProRule" id="PRU00114"/>
    </source>
</evidence>
<evidence type="ECO:0000256" key="4">
    <source>
        <dbReference type="SAM" id="MobiDB-lite"/>
    </source>
</evidence>
<evidence type="ECO:0000305" key="5"/>
<organism>
    <name type="scientific">Rattus norvegicus</name>
    <name type="common">Rat</name>
    <dbReference type="NCBI Taxonomy" id="10116"/>
    <lineage>
        <taxon>Eukaryota</taxon>
        <taxon>Metazoa</taxon>
        <taxon>Chordata</taxon>
        <taxon>Craniata</taxon>
        <taxon>Vertebrata</taxon>
        <taxon>Euteleostomi</taxon>
        <taxon>Mammalia</taxon>
        <taxon>Eutheria</taxon>
        <taxon>Euarchontoglires</taxon>
        <taxon>Glires</taxon>
        <taxon>Rodentia</taxon>
        <taxon>Myomorpha</taxon>
        <taxon>Muroidea</taxon>
        <taxon>Muridae</taxon>
        <taxon>Murinae</taxon>
        <taxon>Rattus</taxon>
    </lineage>
</organism>
<protein>
    <recommendedName>
        <fullName>Interleukin-1 receptor type 2</fullName>
        <shortName>IL-1R-2</shortName>
        <shortName>IL-1RT-2</shortName>
        <shortName>IL-1RT2</shortName>
    </recommendedName>
    <alternativeName>
        <fullName>CD121 antigen-like family member B</fullName>
    </alternativeName>
    <alternativeName>
        <fullName>IL-1 type II receptor</fullName>
    </alternativeName>
    <alternativeName>
        <fullName>Interleukin-1 receptor beta</fullName>
        <shortName>IL-1R-beta</shortName>
    </alternativeName>
    <alternativeName>
        <fullName>Interleukin-1 receptor type II</fullName>
    </alternativeName>
    <cdAntigenName>CD121b</cdAntigenName>
    <component>
        <recommendedName>
            <fullName>Interleukin-1 receptor type 2, membrane form</fullName>
            <shortName>mIL-1R2</shortName>
            <shortName>mIL-1RII</shortName>
        </recommendedName>
    </component>
    <component>
        <recommendedName>
            <fullName>Interleukin-1 receptor type 2, soluble form</fullName>
            <shortName>sIL-1R2</shortName>
            <shortName>sIL-1RII</shortName>
        </recommendedName>
    </component>
</protein>
<keyword id="KW-1003">Cell membrane</keyword>
<keyword id="KW-1015">Disulfide bond</keyword>
<keyword id="KW-0325">Glycoprotein</keyword>
<keyword id="KW-0393">Immunoglobulin domain</keyword>
<keyword id="KW-0472">Membrane</keyword>
<keyword id="KW-0675">Receptor</keyword>
<keyword id="KW-1185">Reference proteome</keyword>
<keyword id="KW-0677">Repeat</keyword>
<keyword id="KW-0964">Secreted</keyword>
<keyword id="KW-0732">Signal</keyword>
<keyword id="KW-0812">Transmembrane</keyword>
<keyword id="KW-1133">Transmembrane helix</keyword>
<name>IL1R2_RAT</name>
<reference key="1">
    <citation type="journal article" date="1994" name="Eur. Cytokine Netw.">
        <title>Interleukin-1 stimulates the expression of type I and type II interleukin-1 receptors in the rat insulinoma cell line Rinm5F; sequencing a rat type II interleukin-1 receptor cDNA.</title>
        <authorList>
            <person name="Bristulf J."/>
            <person name="Gatti S."/>
            <person name="Malinowsky D."/>
            <person name="Bjork L."/>
            <person name="Sundgren A.K."/>
            <person name="Bartfai T."/>
        </authorList>
    </citation>
    <scope>NUCLEOTIDE SEQUENCE [MRNA]</scope>
</reference>
<reference key="2">
    <citation type="journal article" date="2004" name="Genome Res.">
        <title>The status, quality, and expansion of the NIH full-length cDNA project: the Mammalian Gene Collection (MGC).</title>
        <authorList>
            <consortium name="The MGC Project Team"/>
        </authorList>
    </citation>
    <scope>NUCLEOTIDE SEQUENCE [LARGE SCALE MRNA]</scope>
    <source>
        <tissue>Placenta</tissue>
    </source>
</reference>
<feature type="signal peptide" evidence="2">
    <location>
        <begin position="1"/>
        <end position="13"/>
    </location>
</feature>
<feature type="chain" id="PRO_0000015441" description="Interleukin-1 receptor type 2, membrane form">
    <location>
        <begin position="14"/>
        <end position="416"/>
    </location>
</feature>
<feature type="chain" id="PRO_0000415350" description="Interleukin-1 receptor type 2, soluble form">
    <location>
        <begin position="14"/>
        <end status="unknown"/>
    </location>
</feature>
<feature type="topological domain" description="Extracellular" evidence="2">
    <location>
        <begin position="14"/>
        <end position="355"/>
    </location>
</feature>
<feature type="transmembrane region" description="Helical" evidence="2">
    <location>
        <begin position="356"/>
        <end position="381"/>
    </location>
</feature>
<feature type="topological domain" description="Cytoplasmic" evidence="2">
    <location>
        <begin position="382"/>
        <end position="416"/>
    </location>
</feature>
<feature type="domain" description="Ig-like C2-type 1">
    <location>
        <begin position="29"/>
        <end position="136"/>
    </location>
</feature>
<feature type="domain" description="Ig-like C2-type 2">
    <location>
        <begin position="146"/>
        <end position="233"/>
    </location>
</feature>
<feature type="domain" description="Ig-like C2-type 3">
    <location>
        <begin position="249"/>
        <end position="357"/>
    </location>
</feature>
<feature type="region of interest" description="Disordered" evidence="4">
    <location>
        <begin position="396"/>
        <end position="416"/>
    </location>
</feature>
<feature type="compositionally biased region" description="Polar residues" evidence="4">
    <location>
        <begin position="399"/>
        <end position="416"/>
    </location>
</feature>
<feature type="glycosylation site" description="N-linked (GlcNAc...) asparagine" evidence="2">
    <location>
        <position position="124"/>
    </location>
</feature>
<feature type="glycosylation site" description="N-linked (GlcNAc...) asparagine" evidence="2">
    <location>
        <position position="208"/>
    </location>
</feature>
<feature type="glycosylation site" description="N-linked (GlcNAc...) asparagine" evidence="2">
    <location>
        <position position="231"/>
    </location>
</feature>
<feature type="glycosylation site" description="N-linked (GlcNAc...) asparagine" evidence="2">
    <location>
        <position position="289"/>
    </location>
</feature>
<feature type="disulfide bond" evidence="3">
    <location>
        <begin position="42"/>
        <end position="128"/>
    </location>
</feature>
<feature type="disulfide bond" evidence="3">
    <location>
        <begin position="64"/>
        <end position="120"/>
    </location>
</feature>
<feature type="disulfide bond" evidence="3">
    <location>
        <begin position="164"/>
        <end position="219"/>
    </location>
</feature>
<feature type="disulfide bond" evidence="3">
    <location>
        <begin position="270"/>
        <end position="338"/>
    </location>
</feature>
<proteinExistence type="evidence at transcript level"/>
<comment type="function">
    <text evidence="1">Non-signaling receptor for IL1A, IL1B and IL1RN. Reduces IL1B activities. Serves as a decoy receptor by competitive binding to IL1B and preventing its binding to IL1R1. Also modulates cellular response through non-signaling association with IL1RAP after binding to IL1B. IL1R2 (membrane and secreted forms) preferentially binds IL1B and poorly IL1A and IL1RN. The secreted IL1R2 recruits secreted IL1RAP with high affinity; this complex formation may be the dominant mechanism for neutralization of IL1B by secreted/soluble receptors (By similarity).</text>
</comment>
<comment type="subunit">
    <text evidence="1">Associates with IL1RAP to form a non-signaling interleukin-1 receptor complex.</text>
</comment>
<comment type="subcellular location">
    <subcellularLocation>
        <location>Membrane</location>
        <topology>Single-pass type I membrane protein</topology>
    </subcellularLocation>
    <subcellularLocation>
        <location evidence="1">Cell membrane</location>
    </subcellularLocation>
    <subcellularLocation>
        <location evidence="1">Secreted</location>
    </subcellularLocation>
</comment>
<comment type="PTM">
    <text evidence="1">A soluble form (sIL1R2) can also be produced by proteolytic cleavage at the cell surface (shedding) involving a metalloproteinase.</text>
</comment>
<comment type="similarity">
    <text evidence="5">Belongs to the interleukin-1 receptor family.</text>
</comment>
<accession>P43303</accession>
<accession>Q5BJ99</accession>
<sequence>MFILLVLVTGVSAFTTPAVVHTGRVSESPVTSEKHPVLGDDCWFRGRDFKSELRLEGEPVVLRCPLVPHSDTSSSSRSLLTWSKSDSSQLIPGDEPRMWVKDDTLWVLPAVQQDSGTYICTFRNASHCEQMSLELKVFKNTEASFPLVSYLQISALSSTGLLVCPDLKEFISSRTDGKIQWYKGSILLDKGNKKFLSAGDPTRLLISNTSMGDAGYYRCVMTFTYEGKEYNITRNIELRVKGITTEPIPVIISPLETIPASLGSRLIVPCKVFLGTGTSSNTIVWWMANSTFISVAYPRGRVTEGLHHQYSENDENYVEVSLIFDPVTKEDLNTDFKCVATNPRSFQSLHTTVKEVSSTFSWGIALAPLSLIILVVGAIWIRRRCKRQAGKTYGLTKLPTDNQDFPSSPNQIKEMK</sequence>
<dbReference type="EMBL" id="Z22812">
    <property type="protein sequence ID" value="CAA80465.1"/>
    <property type="molecule type" value="mRNA"/>
</dbReference>
<dbReference type="EMBL" id="BC091564">
    <property type="protein sequence ID" value="AAH91564.1"/>
    <property type="molecule type" value="mRNA"/>
</dbReference>
<dbReference type="PIR" id="S33473">
    <property type="entry name" value="S33473"/>
</dbReference>
<dbReference type="RefSeq" id="NP_446405.1">
    <property type="nucleotide sequence ID" value="NM_053953.2"/>
</dbReference>
<dbReference type="RefSeq" id="XP_008765206.1">
    <property type="nucleotide sequence ID" value="XM_008766984.2"/>
</dbReference>
<dbReference type="RefSeq" id="XP_017451737.1">
    <property type="nucleotide sequence ID" value="XM_017596248.1"/>
</dbReference>
<dbReference type="SMR" id="P43303"/>
<dbReference type="FunCoup" id="P43303">
    <property type="interactions" value="175"/>
</dbReference>
<dbReference type="STRING" id="10116.ENSRNOP00000019415"/>
<dbReference type="GlyCosmos" id="P43303">
    <property type="glycosylation" value="4 sites, No reported glycans"/>
</dbReference>
<dbReference type="GlyGen" id="P43303">
    <property type="glycosylation" value="4 sites"/>
</dbReference>
<dbReference type="PhosphoSitePlus" id="P43303"/>
<dbReference type="PaxDb" id="10116-ENSRNOP00000019415"/>
<dbReference type="GeneID" id="117022"/>
<dbReference type="KEGG" id="rno:117022"/>
<dbReference type="UCSC" id="RGD:621147">
    <property type="organism name" value="rat"/>
</dbReference>
<dbReference type="AGR" id="RGD:621147"/>
<dbReference type="CTD" id="7850"/>
<dbReference type="RGD" id="621147">
    <property type="gene designation" value="Il1r2"/>
</dbReference>
<dbReference type="eggNOG" id="ENOG502QVTS">
    <property type="taxonomic scope" value="Eukaryota"/>
</dbReference>
<dbReference type="HOGENOM" id="CLU_051287_0_0_1"/>
<dbReference type="InParanoid" id="P43303"/>
<dbReference type="OrthoDB" id="50939at9989"/>
<dbReference type="PhylomeDB" id="P43303"/>
<dbReference type="TreeFam" id="TF325519"/>
<dbReference type="Reactome" id="R-RNO-9020702">
    <property type="pathway name" value="Interleukin-1 signaling"/>
</dbReference>
<dbReference type="PRO" id="PR:P43303"/>
<dbReference type="Proteomes" id="UP000002494">
    <property type="component" value="Unplaced"/>
</dbReference>
<dbReference type="GO" id="GO:0009986">
    <property type="term" value="C:cell surface"/>
    <property type="evidence" value="ECO:0000318"/>
    <property type="project" value="GO_Central"/>
</dbReference>
<dbReference type="GO" id="GO:0005737">
    <property type="term" value="C:cytoplasm"/>
    <property type="evidence" value="ECO:0000266"/>
    <property type="project" value="RGD"/>
</dbReference>
<dbReference type="GO" id="GO:0005576">
    <property type="term" value="C:extracellular region"/>
    <property type="evidence" value="ECO:0007669"/>
    <property type="project" value="UniProtKB-SubCell"/>
</dbReference>
<dbReference type="GO" id="GO:0005886">
    <property type="term" value="C:plasma membrane"/>
    <property type="evidence" value="ECO:0000318"/>
    <property type="project" value="GO_Central"/>
</dbReference>
<dbReference type="GO" id="GO:0019966">
    <property type="term" value="F:interleukin-1 binding"/>
    <property type="evidence" value="ECO:0000266"/>
    <property type="project" value="RGD"/>
</dbReference>
<dbReference type="GO" id="GO:0004908">
    <property type="term" value="F:interleukin-1 receptor activity"/>
    <property type="evidence" value="ECO:0000266"/>
    <property type="project" value="RGD"/>
</dbReference>
<dbReference type="GO" id="GO:0004910">
    <property type="term" value="F:interleukin-1, type II, blocking receptor activity"/>
    <property type="evidence" value="ECO:0007669"/>
    <property type="project" value="InterPro"/>
</dbReference>
<dbReference type="GO" id="GO:0007166">
    <property type="term" value="P:cell surface receptor signaling pathway"/>
    <property type="evidence" value="ECO:0000318"/>
    <property type="project" value="GO_Central"/>
</dbReference>
<dbReference type="GO" id="GO:1900016">
    <property type="term" value="P:negative regulation of cytokine production involved in inflammatory response"/>
    <property type="evidence" value="ECO:0000266"/>
    <property type="project" value="RGD"/>
</dbReference>
<dbReference type="GO" id="GO:0032690">
    <property type="term" value="P:negative regulation of interleukin-1 alpha production"/>
    <property type="evidence" value="ECO:0000266"/>
    <property type="project" value="RGD"/>
</dbReference>
<dbReference type="GO" id="GO:2000660">
    <property type="term" value="P:negative regulation of interleukin-1-mediated signaling pathway"/>
    <property type="evidence" value="ECO:0000266"/>
    <property type="project" value="RGD"/>
</dbReference>
<dbReference type="GO" id="GO:0010955">
    <property type="term" value="P:negative regulation of protein processing"/>
    <property type="evidence" value="ECO:0000266"/>
    <property type="project" value="RGD"/>
</dbReference>
<dbReference type="GO" id="GO:0016485">
    <property type="term" value="P:protein processing"/>
    <property type="evidence" value="ECO:0000266"/>
    <property type="project" value="RGD"/>
</dbReference>
<dbReference type="FunFam" id="2.60.40.10:FF:001027">
    <property type="entry name" value="Interleukin 1 receptor type 2"/>
    <property type="match status" value="1"/>
</dbReference>
<dbReference type="FunFam" id="2.60.40.10:FF:001326">
    <property type="entry name" value="Interleukin 1 receptor type 2"/>
    <property type="match status" value="1"/>
</dbReference>
<dbReference type="FunFam" id="2.60.40.10:FF:000188">
    <property type="entry name" value="Interleukin-1 receptor accessory protein-like 1"/>
    <property type="match status" value="1"/>
</dbReference>
<dbReference type="Gene3D" id="2.60.40.10">
    <property type="entry name" value="Immunoglobulins"/>
    <property type="match status" value="3"/>
</dbReference>
<dbReference type="InterPro" id="IPR007110">
    <property type="entry name" value="Ig-like_dom"/>
</dbReference>
<dbReference type="InterPro" id="IPR036179">
    <property type="entry name" value="Ig-like_dom_sf"/>
</dbReference>
<dbReference type="InterPro" id="IPR013783">
    <property type="entry name" value="Ig-like_fold"/>
</dbReference>
<dbReference type="InterPro" id="IPR003599">
    <property type="entry name" value="Ig_sub"/>
</dbReference>
<dbReference type="InterPro" id="IPR003598">
    <property type="entry name" value="Ig_sub2"/>
</dbReference>
<dbReference type="InterPro" id="IPR015621">
    <property type="entry name" value="IL-1_rcpt_fam"/>
</dbReference>
<dbReference type="InterPro" id="IPR004074">
    <property type="entry name" value="IL-1_rcpt_I/II-typ"/>
</dbReference>
<dbReference type="InterPro" id="IPR004077">
    <property type="entry name" value="IL-1_rcpt_II-typ"/>
</dbReference>
<dbReference type="InterPro" id="IPR013151">
    <property type="entry name" value="Immunoglobulin_dom"/>
</dbReference>
<dbReference type="PANTHER" id="PTHR11890">
    <property type="entry name" value="INTERLEUKIN-1 RECEPTOR FAMILY MEMBER"/>
    <property type="match status" value="1"/>
</dbReference>
<dbReference type="PANTHER" id="PTHR11890:SF3">
    <property type="entry name" value="INTERLEUKIN-1 RECEPTOR TYPE 2"/>
    <property type="match status" value="1"/>
</dbReference>
<dbReference type="Pfam" id="PF00047">
    <property type="entry name" value="ig"/>
    <property type="match status" value="1"/>
</dbReference>
<dbReference type="PRINTS" id="PR01539">
    <property type="entry name" value="INTRLEUKN1R2"/>
</dbReference>
<dbReference type="PRINTS" id="PR01536">
    <property type="entry name" value="INTRLKN1R12F"/>
</dbReference>
<dbReference type="SMART" id="SM00409">
    <property type="entry name" value="IG"/>
    <property type="match status" value="3"/>
</dbReference>
<dbReference type="SMART" id="SM00408">
    <property type="entry name" value="IGc2"/>
    <property type="match status" value="2"/>
</dbReference>
<dbReference type="SUPFAM" id="SSF48726">
    <property type="entry name" value="Immunoglobulin"/>
    <property type="match status" value="3"/>
</dbReference>
<dbReference type="PROSITE" id="PS50835">
    <property type="entry name" value="IG_LIKE"/>
    <property type="match status" value="3"/>
</dbReference>